<keyword id="KW-0963">Cytoplasm</keyword>
<keyword id="KW-0312">Gluconeogenesis</keyword>
<keyword id="KW-0324">Glycolysis</keyword>
<keyword id="KW-0413">Isomerase</keyword>
<keyword id="KW-1185">Reference proteome</keyword>
<protein>
    <recommendedName>
        <fullName evidence="1">Triosephosphate isomerase</fullName>
        <shortName evidence="1">TIM</shortName>
        <shortName evidence="1">TPI</shortName>
        <ecNumber evidence="1">5.3.1.1</ecNumber>
    </recommendedName>
    <alternativeName>
        <fullName evidence="1">Triose-phosphate isomerase</fullName>
    </alternativeName>
</protein>
<comment type="function">
    <text evidence="1">Involved in the gluconeogenesis. Catalyzes stereospecifically the conversion of dihydroxyacetone phosphate (DHAP) to D-glyceraldehyde-3-phosphate (G3P).</text>
</comment>
<comment type="catalytic activity">
    <reaction evidence="1">
        <text>D-glyceraldehyde 3-phosphate = dihydroxyacetone phosphate</text>
        <dbReference type="Rhea" id="RHEA:18585"/>
        <dbReference type="ChEBI" id="CHEBI:57642"/>
        <dbReference type="ChEBI" id="CHEBI:59776"/>
        <dbReference type="EC" id="5.3.1.1"/>
    </reaction>
</comment>
<comment type="pathway">
    <text evidence="1">Carbohydrate biosynthesis; gluconeogenesis.</text>
</comment>
<comment type="pathway">
    <text evidence="1">Carbohydrate degradation; glycolysis; D-glyceraldehyde 3-phosphate from glycerone phosphate: step 1/1.</text>
</comment>
<comment type="subunit">
    <text evidence="1">Homodimer.</text>
</comment>
<comment type="subcellular location">
    <subcellularLocation>
        <location evidence="1">Cytoplasm</location>
    </subcellularLocation>
</comment>
<comment type="similarity">
    <text evidence="1">Belongs to the triosephosphate isomerase family.</text>
</comment>
<proteinExistence type="inferred from homology"/>
<dbReference type="EC" id="5.3.1.1" evidence="1"/>
<dbReference type="EMBL" id="CT971583">
    <property type="protein sequence ID" value="CAK23861.1"/>
    <property type="molecule type" value="Genomic_DNA"/>
</dbReference>
<dbReference type="SMR" id="A5GLP6"/>
<dbReference type="STRING" id="32051.SynWH7803_1435"/>
<dbReference type="KEGG" id="syx:SynWH7803_1435"/>
<dbReference type="eggNOG" id="COG0149">
    <property type="taxonomic scope" value="Bacteria"/>
</dbReference>
<dbReference type="HOGENOM" id="CLU_024251_2_3_3"/>
<dbReference type="OrthoDB" id="9809429at2"/>
<dbReference type="UniPathway" id="UPA00109">
    <property type="reaction ID" value="UER00189"/>
</dbReference>
<dbReference type="UniPathway" id="UPA00138"/>
<dbReference type="Proteomes" id="UP000001566">
    <property type="component" value="Chromosome"/>
</dbReference>
<dbReference type="GO" id="GO:0005829">
    <property type="term" value="C:cytosol"/>
    <property type="evidence" value="ECO:0007669"/>
    <property type="project" value="TreeGrafter"/>
</dbReference>
<dbReference type="GO" id="GO:0004807">
    <property type="term" value="F:triose-phosphate isomerase activity"/>
    <property type="evidence" value="ECO:0007669"/>
    <property type="project" value="UniProtKB-UniRule"/>
</dbReference>
<dbReference type="GO" id="GO:0006094">
    <property type="term" value="P:gluconeogenesis"/>
    <property type="evidence" value="ECO:0007669"/>
    <property type="project" value="UniProtKB-UniRule"/>
</dbReference>
<dbReference type="GO" id="GO:0046166">
    <property type="term" value="P:glyceraldehyde-3-phosphate biosynthetic process"/>
    <property type="evidence" value="ECO:0007669"/>
    <property type="project" value="TreeGrafter"/>
</dbReference>
<dbReference type="GO" id="GO:0019563">
    <property type="term" value="P:glycerol catabolic process"/>
    <property type="evidence" value="ECO:0007669"/>
    <property type="project" value="TreeGrafter"/>
</dbReference>
<dbReference type="GO" id="GO:0006096">
    <property type="term" value="P:glycolytic process"/>
    <property type="evidence" value="ECO:0007669"/>
    <property type="project" value="UniProtKB-UniRule"/>
</dbReference>
<dbReference type="CDD" id="cd00311">
    <property type="entry name" value="TIM"/>
    <property type="match status" value="1"/>
</dbReference>
<dbReference type="FunFam" id="3.20.20.70:FF:000016">
    <property type="entry name" value="Triosephosphate isomerase"/>
    <property type="match status" value="1"/>
</dbReference>
<dbReference type="Gene3D" id="3.20.20.70">
    <property type="entry name" value="Aldolase class I"/>
    <property type="match status" value="1"/>
</dbReference>
<dbReference type="HAMAP" id="MF_00147_B">
    <property type="entry name" value="TIM_B"/>
    <property type="match status" value="1"/>
</dbReference>
<dbReference type="InterPro" id="IPR013785">
    <property type="entry name" value="Aldolase_TIM"/>
</dbReference>
<dbReference type="InterPro" id="IPR035990">
    <property type="entry name" value="TIM_sf"/>
</dbReference>
<dbReference type="InterPro" id="IPR022896">
    <property type="entry name" value="TrioseP_Isoase_bac/euk"/>
</dbReference>
<dbReference type="InterPro" id="IPR000652">
    <property type="entry name" value="Triosephosphate_isomerase"/>
</dbReference>
<dbReference type="InterPro" id="IPR020861">
    <property type="entry name" value="Triosephosphate_isomerase_AS"/>
</dbReference>
<dbReference type="NCBIfam" id="TIGR00419">
    <property type="entry name" value="tim"/>
    <property type="match status" value="1"/>
</dbReference>
<dbReference type="PANTHER" id="PTHR21139">
    <property type="entry name" value="TRIOSEPHOSPHATE ISOMERASE"/>
    <property type="match status" value="1"/>
</dbReference>
<dbReference type="PANTHER" id="PTHR21139:SF42">
    <property type="entry name" value="TRIOSEPHOSPHATE ISOMERASE"/>
    <property type="match status" value="1"/>
</dbReference>
<dbReference type="Pfam" id="PF00121">
    <property type="entry name" value="TIM"/>
    <property type="match status" value="1"/>
</dbReference>
<dbReference type="SUPFAM" id="SSF51351">
    <property type="entry name" value="Triosephosphate isomerase (TIM)"/>
    <property type="match status" value="1"/>
</dbReference>
<dbReference type="PROSITE" id="PS00171">
    <property type="entry name" value="TIM_1"/>
    <property type="match status" value="1"/>
</dbReference>
<dbReference type="PROSITE" id="PS51440">
    <property type="entry name" value="TIM_2"/>
    <property type="match status" value="1"/>
</dbReference>
<sequence>MRKPVIAGNWKMHMTCAQTRDWMGTFLPLISETPDDRHLVIAPPFTAISTLADVGAGSRVEISSQNVHWEGHGAYTGEISPAMLQEHGVRYAIVGHSEPRKYFSESDEQINHRARSAQAHDLIPIVCVGESDEQRSRGEAERVIRRQVEQGLEGLDPQRLVVAYEPIWAIGTGKTCESAEANRICGLIRSWVGSPDLIIQYGGSVKPANIDELMGMSDIDGVLVGGASLDPEGFARIANYKKG</sequence>
<evidence type="ECO:0000255" key="1">
    <source>
        <dbReference type="HAMAP-Rule" id="MF_00147"/>
    </source>
</evidence>
<reference key="1">
    <citation type="submission" date="2006-05" db="EMBL/GenBank/DDBJ databases">
        <authorList>
            <consortium name="Genoscope"/>
        </authorList>
    </citation>
    <scope>NUCLEOTIDE SEQUENCE [LARGE SCALE GENOMIC DNA]</scope>
    <source>
        <strain>WH7803</strain>
    </source>
</reference>
<gene>
    <name evidence="1" type="primary">tpiA</name>
    <name type="ordered locus">SynWH7803_1435</name>
</gene>
<name>TPIS_SYNPW</name>
<feature type="chain" id="PRO_0000307589" description="Triosephosphate isomerase">
    <location>
        <begin position="1"/>
        <end position="243"/>
    </location>
</feature>
<feature type="active site" description="Electrophile" evidence="1">
    <location>
        <position position="96"/>
    </location>
</feature>
<feature type="active site" description="Proton acceptor" evidence="1">
    <location>
        <position position="165"/>
    </location>
</feature>
<feature type="binding site" evidence="1">
    <location>
        <begin position="9"/>
        <end position="11"/>
    </location>
    <ligand>
        <name>substrate</name>
    </ligand>
</feature>
<feature type="binding site" evidence="1">
    <location>
        <position position="171"/>
    </location>
    <ligand>
        <name>substrate</name>
    </ligand>
</feature>
<feature type="binding site" evidence="1">
    <location>
        <position position="204"/>
    </location>
    <ligand>
        <name>substrate</name>
    </ligand>
</feature>
<feature type="binding site" evidence="1">
    <location>
        <begin position="225"/>
        <end position="226"/>
    </location>
    <ligand>
        <name>substrate</name>
    </ligand>
</feature>
<organism>
    <name type="scientific">Synechococcus sp. (strain WH7803)</name>
    <dbReference type="NCBI Taxonomy" id="32051"/>
    <lineage>
        <taxon>Bacteria</taxon>
        <taxon>Bacillati</taxon>
        <taxon>Cyanobacteriota</taxon>
        <taxon>Cyanophyceae</taxon>
        <taxon>Synechococcales</taxon>
        <taxon>Synechococcaceae</taxon>
        <taxon>Synechococcus</taxon>
    </lineage>
</organism>
<accession>A5GLP6</accession>